<reference key="1">
    <citation type="submission" date="2007-03" db="EMBL/GenBank/DDBJ databases">
        <title>Complete sequence of Prosthecochloris vibrioformis DSM 265.</title>
        <authorList>
            <consortium name="US DOE Joint Genome Institute"/>
            <person name="Copeland A."/>
            <person name="Lucas S."/>
            <person name="Lapidus A."/>
            <person name="Barry K."/>
            <person name="Detter J.C."/>
            <person name="Glavina del Rio T."/>
            <person name="Hammon N."/>
            <person name="Israni S."/>
            <person name="Pitluck S."/>
            <person name="Schmutz J."/>
            <person name="Larimer F."/>
            <person name="Land M."/>
            <person name="Hauser L."/>
            <person name="Mikhailova N."/>
            <person name="Li T."/>
            <person name="Overmann J."/>
            <person name="Schuster S.C."/>
            <person name="Bryant D.A."/>
            <person name="Richardson P."/>
        </authorList>
    </citation>
    <scope>NUCLEOTIDE SEQUENCE [LARGE SCALE GENOMIC DNA]</scope>
    <source>
        <strain>DSM 265 / 1930</strain>
    </source>
</reference>
<proteinExistence type="inferred from homology"/>
<comment type="similarity">
    <text evidence="1">Belongs to the bacterial ribosomal protein bL35 family.</text>
</comment>
<sequence>MPKMKSHRGACKRFKATASGRIKRERMNGSHNLEHKNRKRTRRLHQSALLECTKKERQIKRMILA</sequence>
<dbReference type="EMBL" id="CP000607">
    <property type="protein sequence ID" value="ABP36211.1"/>
    <property type="molecule type" value="Genomic_DNA"/>
</dbReference>
<dbReference type="SMR" id="A4SCK2"/>
<dbReference type="STRING" id="290318.Cvib_0188"/>
<dbReference type="KEGG" id="pvi:Cvib_0188"/>
<dbReference type="eggNOG" id="COG0291">
    <property type="taxonomic scope" value="Bacteria"/>
</dbReference>
<dbReference type="HOGENOM" id="CLU_169643_4_3_10"/>
<dbReference type="OrthoDB" id="47476at2"/>
<dbReference type="GO" id="GO:0022625">
    <property type="term" value="C:cytosolic large ribosomal subunit"/>
    <property type="evidence" value="ECO:0007669"/>
    <property type="project" value="TreeGrafter"/>
</dbReference>
<dbReference type="GO" id="GO:0003735">
    <property type="term" value="F:structural constituent of ribosome"/>
    <property type="evidence" value="ECO:0007669"/>
    <property type="project" value="InterPro"/>
</dbReference>
<dbReference type="GO" id="GO:0006412">
    <property type="term" value="P:translation"/>
    <property type="evidence" value="ECO:0007669"/>
    <property type="project" value="UniProtKB-UniRule"/>
</dbReference>
<dbReference type="FunFam" id="4.10.410.60:FF:000001">
    <property type="entry name" value="50S ribosomal protein L35"/>
    <property type="match status" value="1"/>
</dbReference>
<dbReference type="Gene3D" id="4.10.410.60">
    <property type="match status" value="1"/>
</dbReference>
<dbReference type="HAMAP" id="MF_00514">
    <property type="entry name" value="Ribosomal_bL35"/>
    <property type="match status" value="1"/>
</dbReference>
<dbReference type="InterPro" id="IPR001706">
    <property type="entry name" value="Ribosomal_bL35"/>
</dbReference>
<dbReference type="InterPro" id="IPR021137">
    <property type="entry name" value="Ribosomal_bL35-like"/>
</dbReference>
<dbReference type="InterPro" id="IPR018265">
    <property type="entry name" value="Ribosomal_bL35_CS"/>
</dbReference>
<dbReference type="InterPro" id="IPR037229">
    <property type="entry name" value="Ribosomal_bL35_sf"/>
</dbReference>
<dbReference type="NCBIfam" id="TIGR00001">
    <property type="entry name" value="rpmI_bact"/>
    <property type="match status" value="1"/>
</dbReference>
<dbReference type="PANTHER" id="PTHR33343">
    <property type="entry name" value="54S RIBOSOMAL PROTEIN BL35M"/>
    <property type="match status" value="1"/>
</dbReference>
<dbReference type="PANTHER" id="PTHR33343:SF1">
    <property type="entry name" value="LARGE RIBOSOMAL SUBUNIT PROTEIN BL35M"/>
    <property type="match status" value="1"/>
</dbReference>
<dbReference type="Pfam" id="PF01632">
    <property type="entry name" value="Ribosomal_L35p"/>
    <property type="match status" value="1"/>
</dbReference>
<dbReference type="PRINTS" id="PR00064">
    <property type="entry name" value="RIBOSOMALL35"/>
</dbReference>
<dbReference type="SUPFAM" id="SSF143034">
    <property type="entry name" value="L35p-like"/>
    <property type="match status" value="1"/>
</dbReference>
<dbReference type="PROSITE" id="PS00936">
    <property type="entry name" value="RIBOSOMAL_L35"/>
    <property type="match status" value="1"/>
</dbReference>
<evidence type="ECO:0000255" key="1">
    <source>
        <dbReference type="HAMAP-Rule" id="MF_00514"/>
    </source>
</evidence>
<evidence type="ECO:0000305" key="2"/>
<feature type="chain" id="PRO_1000081619" description="Large ribosomal subunit protein bL35">
    <location>
        <begin position="1"/>
        <end position="65"/>
    </location>
</feature>
<organism>
    <name type="scientific">Chlorobium phaeovibrioides (strain DSM 265 / 1930)</name>
    <name type="common">Prosthecochloris vibrioformis (strain DSM 265)</name>
    <dbReference type="NCBI Taxonomy" id="290318"/>
    <lineage>
        <taxon>Bacteria</taxon>
        <taxon>Pseudomonadati</taxon>
        <taxon>Chlorobiota</taxon>
        <taxon>Chlorobiia</taxon>
        <taxon>Chlorobiales</taxon>
        <taxon>Chlorobiaceae</taxon>
        <taxon>Chlorobium/Pelodictyon group</taxon>
        <taxon>Chlorobium</taxon>
    </lineage>
</organism>
<gene>
    <name evidence="1" type="primary">rpmI</name>
    <name type="ordered locus">Cvib_0188</name>
</gene>
<keyword id="KW-0687">Ribonucleoprotein</keyword>
<keyword id="KW-0689">Ribosomal protein</keyword>
<protein>
    <recommendedName>
        <fullName evidence="1">Large ribosomal subunit protein bL35</fullName>
    </recommendedName>
    <alternativeName>
        <fullName evidence="2">50S ribosomal protein L35</fullName>
    </alternativeName>
</protein>
<name>RL35_CHLPM</name>
<accession>A4SCK2</accession>